<accession>Q99VL4</accession>
<sequence>MRKFLSKTHHHTNPLWRVYRLVKFSKVFKNVIIIEFSKFIPSMVLKRHIYKQLLNINIGNQSSIAYKVMLDIFYPELITIGSNSVIGYNVTILTHEALVDEFRYGPVTIGSNTLIGANATILPGITIGDNVKVAAGTVVSKDIPDNGFAYGNPMYIKMIRR</sequence>
<keyword id="KW-0012">Acyltransferase</keyword>
<keyword id="KW-0677">Repeat</keyword>
<keyword id="KW-0808">Transferase</keyword>
<proteinExistence type="inferred from homology"/>
<evidence type="ECO:0000305" key="1"/>
<protein>
    <recommendedName>
        <fullName>Putative acetyltransferase SAV0762</fullName>
        <ecNumber>2.3.1.-</ecNumber>
    </recommendedName>
</protein>
<dbReference type="EC" id="2.3.1.-"/>
<dbReference type="EMBL" id="BA000017">
    <property type="protein sequence ID" value="BAB56924.1"/>
    <property type="molecule type" value="Genomic_DNA"/>
</dbReference>
<dbReference type="RefSeq" id="WP_001224793.1">
    <property type="nucleotide sequence ID" value="NC_002758.2"/>
</dbReference>
<dbReference type="SMR" id="Q99VL4"/>
<dbReference type="KEGG" id="sav:SAV0762"/>
<dbReference type="HOGENOM" id="CLU_051638_16_1_9"/>
<dbReference type="PhylomeDB" id="Q99VL4"/>
<dbReference type="Proteomes" id="UP000002481">
    <property type="component" value="Chromosome"/>
</dbReference>
<dbReference type="GO" id="GO:0016746">
    <property type="term" value="F:acyltransferase activity"/>
    <property type="evidence" value="ECO:0007669"/>
    <property type="project" value="UniProtKB-KW"/>
</dbReference>
<dbReference type="Gene3D" id="2.160.10.10">
    <property type="entry name" value="Hexapeptide repeat proteins"/>
    <property type="match status" value="1"/>
</dbReference>
<dbReference type="InterPro" id="IPR001451">
    <property type="entry name" value="Hexapep"/>
</dbReference>
<dbReference type="InterPro" id="IPR018357">
    <property type="entry name" value="Hexapep_transf_CS"/>
</dbReference>
<dbReference type="InterPro" id="IPR051159">
    <property type="entry name" value="Hexapeptide_acetyltransf"/>
</dbReference>
<dbReference type="InterPro" id="IPR011004">
    <property type="entry name" value="Trimer_LpxA-like_sf"/>
</dbReference>
<dbReference type="PANTHER" id="PTHR23416">
    <property type="entry name" value="SIALIC ACID SYNTHASE-RELATED"/>
    <property type="match status" value="1"/>
</dbReference>
<dbReference type="Pfam" id="PF14602">
    <property type="entry name" value="Hexapep_2"/>
    <property type="match status" value="1"/>
</dbReference>
<dbReference type="SUPFAM" id="SSF51161">
    <property type="entry name" value="Trimeric LpxA-like enzymes"/>
    <property type="match status" value="1"/>
</dbReference>
<dbReference type="PROSITE" id="PS00101">
    <property type="entry name" value="HEXAPEP_TRANSFERASES"/>
    <property type="match status" value="1"/>
</dbReference>
<name>ATRF1_STAAM</name>
<comment type="similarity">
    <text evidence="1">Belongs to the transferase hexapeptide repeat family.</text>
</comment>
<feature type="chain" id="PRO_0000068746" description="Putative acetyltransferase SAV0762">
    <location>
        <begin position="1"/>
        <end position="161"/>
    </location>
</feature>
<organism>
    <name type="scientific">Staphylococcus aureus (strain Mu50 / ATCC 700699)</name>
    <dbReference type="NCBI Taxonomy" id="158878"/>
    <lineage>
        <taxon>Bacteria</taxon>
        <taxon>Bacillati</taxon>
        <taxon>Bacillota</taxon>
        <taxon>Bacilli</taxon>
        <taxon>Bacillales</taxon>
        <taxon>Staphylococcaceae</taxon>
        <taxon>Staphylococcus</taxon>
    </lineage>
</organism>
<reference key="1">
    <citation type="journal article" date="2001" name="Lancet">
        <title>Whole genome sequencing of meticillin-resistant Staphylococcus aureus.</title>
        <authorList>
            <person name="Kuroda M."/>
            <person name="Ohta T."/>
            <person name="Uchiyama I."/>
            <person name="Baba T."/>
            <person name="Yuzawa H."/>
            <person name="Kobayashi I."/>
            <person name="Cui L."/>
            <person name="Oguchi A."/>
            <person name="Aoki K."/>
            <person name="Nagai Y."/>
            <person name="Lian J.-Q."/>
            <person name="Ito T."/>
            <person name="Kanamori M."/>
            <person name="Matsumaru H."/>
            <person name="Maruyama A."/>
            <person name="Murakami H."/>
            <person name="Hosoyama A."/>
            <person name="Mizutani-Ui Y."/>
            <person name="Takahashi N.K."/>
            <person name="Sawano T."/>
            <person name="Inoue R."/>
            <person name="Kaito C."/>
            <person name="Sekimizu K."/>
            <person name="Hirakawa H."/>
            <person name="Kuhara S."/>
            <person name="Goto S."/>
            <person name="Yabuzaki J."/>
            <person name="Kanehisa M."/>
            <person name="Yamashita A."/>
            <person name="Oshima K."/>
            <person name="Furuya K."/>
            <person name="Yoshino C."/>
            <person name="Shiba T."/>
            <person name="Hattori M."/>
            <person name="Ogasawara N."/>
            <person name="Hayashi H."/>
            <person name="Hiramatsu K."/>
        </authorList>
    </citation>
    <scope>NUCLEOTIDE SEQUENCE [LARGE SCALE GENOMIC DNA]</scope>
    <source>
        <strain>Mu50 / ATCC 700699</strain>
    </source>
</reference>
<gene>
    <name type="ordered locus">SAV0762</name>
</gene>